<organism>
    <name type="scientific">Streptococcus pyogenes serotype M49 (strain NZ131)</name>
    <dbReference type="NCBI Taxonomy" id="471876"/>
    <lineage>
        <taxon>Bacteria</taxon>
        <taxon>Bacillati</taxon>
        <taxon>Bacillota</taxon>
        <taxon>Bacilli</taxon>
        <taxon>Lactobacillales</taxon>
        <taxon>Streptococcaceae</taxon>
        <taxon>Streptococcus</taxon>
    </lineage>
</organism>
<comment type="function">
    <text evidence="1">Involved in the synthesis of autoinducer 2 (AI-2) which is secreted by bacteria and is used to communicate both the cell density and the metabolic potential of the environment. The regulation of gene expression in response to changes in cell density is called quorum sensing. Catalyzes the transformation of S-ribosylhomocysteine (RHC) to homocysteine (HC) and 4,5-dihydroxy-2,3-pentadione (DPD).</text>
</comment>
<comment type="catalytic activity">
    <reaction evidence="1">
        <text>S-(5-deoxy-D-ribos-5-yl)-L-homocysteine = (S)-4,5-dihydroxypentane-2,3-dione + L-homocysteine</text>
        <dbReference type="Rhea" id="RHEA:17753"/>
        <dbReference type="ChEBI" id="CHEBI:29484"/>
        <dbReference type="ChEBI" id="CHEBI:58195"/>
        <dbReference type="ChEBI" id="CHEBI:58199"/>
        <dbReference type="EC" id="4.4.1.21"/>
    </reaction>
</comment>
<comment type="cofactor">
    <cofactor evidence="1">
        <name>Fe cation</name>
        <dbReference type="ChEBI" id="CHEBI:24875"/>
    </cofactor>
    <text evidence="1">Binds 1 Fe cation per subunit.</text>
</comment>
<comment type="subunit">
    <text evidence="1">Homodimer.</text>
</comment>
<comment type="similarity">
    <text evidence="1">Belongs to the LuxS family.</text>
</comment>
<feature type="chain" id="PRO_1000093333" description="S-ribosylhomocysteine lyase">
    <location>
        <begin position="1"/>
        <end position="160"/>
    </location>
</feature>
<feature type="binding site" evidence="1">
    <location>
        <position position="57"/>
    </location>
    <ligand>
        <name>Fe cation</name>
        <dbReference type="ChEBI" id="CHEBI:24875"/>
    </ligand>
</feature>
<feature type="binding site" evidence="1">
    <location>
        <position position="61"/>
    </location>
    <ligand>
        <name>Fe cation</name>
        <dbReference type="ChEBI" id="CHEBI:24875"/>
    </ligand>
</feature>
<feature type="binding site" evidence="1">
    <location>
        <position position="127"/>
    </location>
    <ligand>
        <name>Fe cation</name>
        <dbReference type="ChEBI" id="CHEBI:24875"/>
    </ligand>
</feature>
<sequence length="160" mass="17979">MTKEVIVESFELDHTIVKAPYVRLISEEFGPKGDRITNFDVRLVQPNQNSIETAGLHTIEHLLAKLIRQRIDGMIDCSPFGCRTGFHLIMWGKHSSTDIAKVIKSSLEEIATGITWEDVPGTTLESCGNYKDHSLFAAKEWAQLIIDQGISDDPFSRHVI</sequence>
<gene>
    <name evidence="1" type="primary">luxS</name>
    <name type="ordered locus">Spy49_1273</name>
</gene>
<proteinExistence type="inferred from homology"/>
<protein>
    <recommendedName>
        <fullName evidence="1">S-ribosylhomocysteine lyase</fullName>
        <ecNumber evidence="1">4.4.1.21</ecNumber>
    </recommendedName>
    <alternativeName>
        <fullName evidence="1">AI-2 synthesis protein</fullName>
    </alternativeName>
    <alternativeName>
        <fullName evidence="1">Autoinducer-2 production protein LuxS</fullName>
    </alternativeName>
</protein>
<accession>B5XMJ4</accession>
<reference key="1">
    <citation type="journal article" date="2008" name="J. Bacteriol.">
        <title>Genome sequence of a nephritogenic and highly transformable M49 strain of Streptococcus pyogenes.</title>
        <authorList>
            <person name="McShan W.M."/>
            <person name="Ferretti J.J."/>
            <person name="Karasawa T."/>
            <person name="Suvorov A.N."/>
            <person name="Lin S."/>
            <person name="Qin B."/>
            <person name="Jia H."/>
            <person name="Kenton S."/>
            <person name="Najar F."/>
            <person name="Wu H."/>
            <person name="Scott J."/>
            <person name="Roe B.A."/>
            <person name="Savic D.J."/>
        </authorList>
    </citation>
    <scope>NUCLEOTIDE SEQUENCE [LARGE SCALE GENOMIC DNA]</scope>
    <source>
        <strain>NZ131</strain>
    </source>
</reference>
<evidence type="ECO:0000255" key="1">
    <source>
        <dbReference type="HAMAP-Rule" id="MF_00091"/>
    </source>
</evidence>
<dbReference type="EC" id="4.4.1.21" evidence="1"/>
<dbReference type="EMBL" id="CP000829">
    <property type="protein sequence ID" value="ACI61556.1"/>
    <property type="molecule type" value="Genomic_DNA"/>
</dbReference>
<dbReference type="SMR" id="B5XMJ4"/>
<dbReference type="KEGG" id="soz:Spy49_1273"/>
<dbReference type="HOGENOM" id="CLU_107531_2_1_9"/>
<dbReference type="Proteomes" id="UP000001039">
    <property type="component" value="Chromosome"/>
</dbReference>
<dbReference type="GO" id="GO:0005506">
    <property type="term" value="F:iron ion binding"/>
    <property type="evidence" value="ECO:0007669"/>
    <property type="project" value="InterPro"/>
</dbReference>
<dbReference type="GO" id="GO:0043768">
    <property type="term" value="F:S-ribosylhomocysteine lyase activity"/>
    <property type="evidence" value="ECO:0007669"/>
    <property type="project" value="UniProtKB-UniRule"/>
</dbReference>
<dbReference type="GO" id="GO:0009372">
    <property type="term" value="P:quorum sensing"/>
    <property type="evidence" value="ECO:0007669"/>
    <property type="project" value="UniProtKB-UniRule"/>
</dbReference>
<dbReference type="Gene3D" id="3.30.1360.80">
    <property type="entry name" value="S-ribosylhomocysteinase (LuxS)"/>
    <property type="match status" value="1"/>
</dbReference>
<dbReference type="HAMAP" id="MF_00091">
    <property type="entry name" value="LuxS"/>
    <property type="match status" value="1"/>
</dbReference>
<dbReference type="InterPro" id="IPR037005">
    <property type="entry name" value="LuxS_sf"/>
</dbReference>
<dbReference type="InterPro" id="IPR011249">
    <property type="entry name" value="Metalloenz_LuxS/M16"/>
</dbReference>
<dbReference type="InterPro" id="IPR003815">
    <property type="entry name" value="S-ribosylhomocysteinase"/>
</dbReference>
<dbReference type="NCBIfam" id="NF002607">
    <property type="entry name" value="PRK02260.2-5"/>
    <property type="match status" value="1"/>
</dbReference>
<dbReference type="NCBIfam" id="NF002608">
    <property type="entry name" value="PRK02260.3-1"/>
    <property type="match status" value="1"/>
</dbReference>
<dbReference type="PANTHER" id="PTHR35799">
    <property type="entry name" value="S-RIBOSYLHOMOCYSTEINE LYASE"/>
    <property type="match status" value="1"/>
</dbReference>
<dbReference type="PANTHER" id="PTHR35799:SF1">
    <property type="entry name" value="S-RIBOSYLHOMOCYSTEINE LYASE"/>
    <property type="match status" value="1"/>
</dbReference>
<dbReference type="Pfam" id="PF02664">
    <property type="entry name" value="LuxS"/>
    <property type="match status" value="1"/>
</dbReference>
<dbReference type="PIRSF" id="PIRSF006160">
    <property type="entry name" value="AI2"/>
    <property type="match status" value="1"/>
</dbReference>
<dbReference type="PRINTS" id="PR01487">
    <property type="entry name" value="LUXSPROTEIN"/>
</dbReference>
<dbReference type="SUPFAM" id="SSF63411">
    <property type="entry name" value="LuxS/MPP-like metallohydrolase"/>
    <property type="match status" value="1"/>
</dbReference>
<name>LUXS_STRPZ</name>
<keyword id="KW-0071">Autoinducer synthesis</keyword>
<keyword id="KW-0408">Iron</keyword>
<keyword id="KW-0456">Lyase</keyword>
<keyword id="KW-0479">Metal-binding</keyword>
<keyword id="KW-0673">Quorum sensing</keyword>